<sequence>MAGPDSPQQQQVEEKAEQIDDAELAFQGINMLLNNGFRESDELFRRYRTHSPLMSFGASFVSFLNAMMTFEEEKMQMASDDLRTTEKLCESDNAGVIETIRNKIKKSMDSGRSGVEIVDRLQRQIIVADCQVYLAVLSFVKQELSAYIKGGWILRKAWKMYNKCYSDISQLQEACRRRSSDQQGALASDQANHNTSTGSGGRVTDEVLDRLKGSVSFGYGLFHLCISMVPPHLLKIVNLLGFPGDRHQGLASLAYASESKDMKAPLATLALLWYHTVVQPFFALDGSDSRAGLLEAKAILQKKAMVYPNSSLFIFFKGRVQRLECQINSALASFQDALEFASDQREIQHVCLYEIGWCSMIEMSFEDAFRSFERLKNESRWSQCYYAYLTGVCQGASGDLEGAKGVFRDVQKLFKRKNNQIEQFALKRAEKLRKVSLTRELCILGVVEVLYLWKALPNCSSSKLQLMNQVLQGLDDQSSIGLKHLLLGAIQKCLGNIKDALQSFQLAAQDEYGRLNNSYVQPYACYELGCVLLAKPETLSKGRSLLLQAKENYAGYDFENRLHVRIHSALASIKEVVPH</sequence>
<name>TT39C_DANRE</name>
<protein>
    <recommendedName>
        <fullName>Tetratricopeptide repeat protein 39C</fullName>
        <shortName>TPR repeat protein 39C</shortName>
    </recommendedName>
</protein>
<accession>Q1LXE6</accession>
<accession>Q503T7</accession>
<evidence type="ECO:0000256" key="1">
    <source>
        <dbReference type="SAM" id="MobiDB-lite"/>
    </source>
</evidence>
<evidence type="ECO:0000303" key="2">
    <source ref="2"/>
</evidence>
<evidence type="ECO:0000305" key="3"/>
<gene>
    <name type="primary">ttc39c</name>
    <name type="ORF">si:ch73-264b7.2</name>
</gene>
<organism>
    <name type="scientific">Danio rerio</name>
    <name type="common">Zebrafish</name>
    <name type="synonym">Brachydanio rerio</name>
    <dbReference type="NCBI Taxonomy" id="7955"/>
    <lineage>
        <taxon>Eukaryota</taxon>
        <taxon>Metazoa</taxon>
        <taxon>Chordata</taxon>
        <taxon>Craniata</taxon>
        <taxon>Vertebrata</taxon>
        <taxon>Euteleostomi</taxon>
        <taxon>Actinopterygii</taxon>
        <taxon>Neopterygii</taxon>
        <taxon>Teleostei</taxon>
        <taxon>Ostariophysi</taxon>
        <taxon>Cypriniformes</taxon>
        <taxon>Danionidae</taxon>
        <taxon>Danioninae</taxon>
        <taxon>Danio</taxon>
    </lineage>
</organism>
<keyword id="KW-0025">Alternative splicing</keyword>
<keyword id="KW-1185">Reference proteome</keyword>
<keyword id="KW-0677">Repeat</keyword>
<keyword id="KW-0802">TPR repeat</keyword>
<comment type="alternative products">
    <event type="alternative splicing"/>
    <isoform>
        <id>Q1LXE6-1</id>
        <name>1</name>
        <sequence type="displayed"/>
    </isoform>
    <isoform>
        <id>Q1LXE6-2</id>
        <name>2</name>
        <sequence type="described" ref="VSP_026591 VSP_026592"/>
    </isoform>
</comment>
<comment type="similarity">
    <text evidence="3">Belongs to the TTC39 family.</text>
</comment>
<proteinExistence type="evidence at transcript level"/>
<dbReference type="EMBL" id="BX465190">
    <property type="protein sequence ID" value="CAK05140.1"/>
    <property type="molecule type" value="Genomic_DNA"/>
</dbReference>
<dbReference type="EMBL" id="BC095189">
    <property type="protein sequence ID" value="AAH95189.1"/>
    <property type="molecule type" value="mRNA"/>
</dbReference>
<dbReference type="RefSeq" id="NP_001018404.3">
    <molecule id="Q1LXE6-1"/>
    <property type="nucleotide sequence ID" value="NM_001020568.3"/>
</dbReference>
<dbReference type="SMR" id="Q1LXE6"/>
<dbReference type="FunCoup" id="Q1LXE6">
    <property type="interactions" value="38"/>
</dbReference>
<dbReference type="STRING" id="7955.ENSDARP00000135033"/>
<dbReference type="PaxDb" id="7955-ENSDARP00000096452"/>
<dbReference type="Ensembl" id="ENSDART00000168170">
    <molecule id="Q1LXE6-1"/>
    <property type="protein sequence ID" value="ENSDARP00000135033"/>
    <property type="gene ID" value="ENSDARG00000102308"/>
</dbReference>
<dbReference type="Ensembl" id="ENSDART00000191942">
    <molecule id="Q1LXE6-1"/>
    <property type="protein sequence ID" value="ENSDARP00000148305"/>
    <property type="gene ID" value="ENSDARG00000115554"/>
</dbReference>
<dbReference type="GeneID" id="553591"/>
<dbReference type="KEGG" id="dre:553591"/>
<dbReference type="AGR" id="ZFIN:ZDB-GENE-050522-194"/>
<dbReference type="CTD" id="125488"/>
<dbReference type="ZFIN" id="ZDB-GENE-050522-194">
    <property type="gene designation" value="ttc39c"/>
</dbReference>
<dbReference type="eggNOG" id="KOG3783">
    <property type="taxonomic scope" value="Eukaryota"/>
</dbReference>
<dbReference type="HOGENOM" id="CLU_010086_4_1_1"/>
<dbReference type="InParanoid" id="Q1LXE6"/>
<dbReference type="OMA" id="YNIAMKQ"/>
<dbReference type="OrthoDB" id="2154985at2759"/>
<dbReference type="PhylomeDB" id="Q1LXE6"/>
<dbReference type="TreeFam" id="TF313761"/>
<dbReference type="PRO" id="PR:Q1LXE6"/>
<dbReference type="Proteomes" id="UP000000437">
    <property type="component" value="Alternate scaffold 22"/>
</dbReference>
<dbReference type="Proteomes" id="UP000000437">
    <property type="component" value="Chromosome 22"/>
</dbReference>
<dbReference type="Bgee" id="ENSDARG00000102308">
    <property type="expression patterns" value="Expressed in brain and 19 other cell types or tissues"/>
</dbReference>
<dbReference type="GO" id="GO:0060271">
    <property type="term" value="P:cilium assembly"/>
    <property type="evidence" value="ECO:0000315"/>
    <property type="project" value="ZFIN"/>
</dbReference>
<dbReference type="GO" id="GO:0061371">
    <property type="term" value="P:determination of heart left/right asymmetry"/>
    <property type="evidence" value="ECO:0000315"/>
    <property type="project" value="ZFIN"/>
</dbReference>
<dbReference type="GO" id="GO:0032474">
    <property type="term" value="P:otolith morphogenesis"/>
    <property type="evidence" value="ECO:0000315"/>
    <property type="project" value="ZFIN"/>
</dbReference>
<dbReference type="Gene3D" id="1.25.40.10">
    <property type="entry name" value="Tetratricopeptide repeat domain"/>
    <property type="match status" value="1"/>
</dbReference>
<dbReference type="InterPro" id="IPR019412">
    <property type="entry name" value="Iml2/TPR_39"/>
</dbReference>
<dbReference type="InterPro" id="IPR011990">
    <property type="entry name" value="TPR-like_helical_dom_sf"/>
</dbReference>
<dbReference type="PANTHER" id="PTHR31859">
    <property type="entry name" value="TETRATRICOPEPTIDE REPEAT PROTEIN 39 FAMILY MEMBER"/>
    <property type="match status" value="1"/>
</dbReference>
<dbReference type="PANTHER" id="PTHR31859:SF1">
    <property type="entry name" value="TETRATRICOPEPTIDE REPEAT PROTEIN 39C"/>
    <property type="match status" value="1"/>
</dbReference>
<dbReference type="Pfam" id="PF10300">
    <property type="entry name" value="Iml2-TPR_39"/>
    <property type="match status" value="1"/>
</dbReference>
<dbReference type="SUPFAM" id="SSF48452">
    <property type="entry name" value="TPR-like"/>
    <property type="match status" value="1"/>
</dbReference>
<feature type="chain" id="PRO_0000274354" description="Tetratricopeptide repeat protein 39C">
    <location>
        <begin position="1"/>
        <end position="579"/>
    </location>
</feature>
<feature type="repeat" description="TPR 1">
    <location>
        <begin position="311"/>
        <end position="344"/>
    </location>
</feature>
<feature type="repeat" description="TPR 2">
    <location>
        <begin position="349"/>
        <end position="382"/>
    </location>
</feature>
<feature type="repeat" description="TPR 3">
    <location>
        <begin position="481"/>
        <end position="514"/>
    </location>
</feature>
<feature type="region of interest" description="Disordered" evidence="1">
    <location>
        <begin position="182"/>
        <end position="202"/>
    </location>
</feature>
<feature type="compositionally biased region" description="Polar residues" evidence="1">
    <location>
        <begin position="182"/>
        <end position="197"/>
    </location>
</feature>
<feature type="splice variant" id="VSP_026591" description="In isoform 2." evidence="2">
    <original>KAPLATLALLWYH</original>
    <variation>ILHRSEAQILSSL</variation>
    <location>
        <begin position="263"/>
        <end position="275"/>
    </location>
</feature>
<feature type="splice variant" id="VSP_026592" description="In isoform 2." evidence="2">
    <location>
        <begin position="276"/>
        <end position="579"/>
    </location>
</feature>
<reference key="1">
    <citation type="journal article" date="2013" name="Nature">
        <title>The zebrafish reference genome sequence and its relationship to the human genome.</title>
        <authorList>
            <person name="Howe K."/>
            <person name="Clark M.D."/>
            <person name="Torroja C.F."/>
            <person name="Torrance J."/>
            <person name="Berthelot C."/>
            <person name="Muffato M."/>
            <person name="Collins J.E."/>
            <person name="Humphray S."/>
            <person name="McLaren K."/>
            <person name="Matthews L."/>
            <person name="McLaren S."/>
            <person name="Sealy I."/>
            <person name="Caccamo M."/>
            <person name="Churcher C."/>
            <person name="Scott C."/>
            <person name="Barrett J.C."/>
            <person name="Koch R."/>
            <person name="Rauch G.J."/>
            <person name="White S."/>
            <person name="Chow W."/>
            <person name="Kilian B."/>
            <person name="Quintais L.T."/>
            <person name="Guerra-Assuncao J.A."/>
            <person name="Zhou Y."/>
            <person name="Gu Y."/>
            <person name="Yen J."/>
            <person name="Vogel J.H."/>
            <person name="Eyre T."/>
            <person name="Redmond S."/>
            <person name="Banerjee R."/>
            <person name="Chi J."/>
            <person name="Fu B."/>
            <person name="Langley E."/>
            <person name="Maguire S.F."/>
            <person name="Laird G.K."/>
            <person name="Lloyd D."/>
            <person name="Kenyon E."/>
            <person name="Donaldson S."/>
            <person name="Sehra H."/>
            <person name="Almeida-King J."/>
            <person name="Loveland J."/>
            <person name="Trevanion S."/>
            <person name="Jones M."/>
            <person name="Quail M."/>
            <person name="Willey D."/>
            <person name="Hunt A."/>
            <person name="Burton J."/>
            <person name="Sims S."/>
            <person name="McLay K."/>
            <person name="Plumb B."/>
            <person name="Davis J."/>
            <person name="Clee C."/>
            <person name="Oliver K."/>
            <person name="Clark R."/>
            <person name="Riddle C."/>
            <person name="Elliot D."/>
            <person name="Threadgold G."/>
            <person name="Harden G."/>
            <person name="Ware D."/>
            <person name="Begum S."/>
            <person name="Mortimore B."/>
            <person name="Kerry G."/>
            <person name="Heath P."/>
            <person name="Phillimore B."/>
            <person name="Tracey A."/>
            <person name="Corby N."/>
            <person name="Dunn M."/>
            <person name="Johnson C."/>
            <person name="Wood J."/>
            <person name="Clark S."/>
            <person name="Pelan S."/>
            <person name="Griffiths G."/>
            <person name="Smith M."/>
            <person name="Glithero R."/>
            <person name="Howden P."/>
            <person name="Barker N."/>
            <person name="Lloyd C."/>
            <person name="Stevens C."/>
            <person name="Harley J."/>
            <person name="Holt K."/>
            <person name="Panagiotidis G."/>
            <person name="Lovell J."/>
            <person name="Beasley H."/>
            <person name="Henderson C."/>
            <person name="Gordon D."/>
            <person name="Auger K."/>
            <person name="Wright D."/>
            <person name="Collins J."/>
            <person name="Raisen C."/>
            <person name="Dyer L."/>
            <person name="Leung K."/>
            <person name="Robertson L."/>
            <person name="Ambridge K."/>
            <person name="Leongamornlert D."/>
            <person name="McGuire S."/>
            <person name="Gilderthorp R."/>
            <person name="Griffiths C."/>
            <person name="Manthravadi D."/>
            <person name="Nichol S."/>
            <person name="Barker G."/>
            <person name="Whitehead S."/>
            <person name="Kay M."/>
            <person name="Brown J."/>
            <person name="Murnane C."/>
            <person name="Gray E."/>
            <person name="Humphries M."/>
            <person name="Sycamore N."/>
            <person name="Barker D."/>
            <person name="Saunders D."/>
            <person name="Wallis J."/>
            <person name="Babbage A."/>
            <person name="Hammond S."/>
            <person name="Mashreghi-Mohammadi M."/>
            <person name="Barr L."/>
            <person name="Martin S."/>
            <person name="Wray P."/>
            <person name="Ellington A."/>
            <person name="Matthews N."/>
            <person name="Ellwood M."/>
            <person name="Woodmansey R."/>
            <person name="Clark G."/>
            <person name="Cooper J."/>
            <person name="Tromans A."/>
            <person name="Grafham D."/>
            <person name="Skuce C."/>
            <person name="Pandian R."/>
            <person name="Andrews R."/>
            <person name="Harrison E."/>
            <person name="Kimberley A."/>
            <person name="Garnett J."/>
            <person name="Fosker N."/>
            <person name="Hall R."/>
            <person name="Garner P."/>
            <person name="Kelly D."/>
            <person name="Bird C."/>
            <person name="Palmer S."/>
            <person name="Gehring I."/>
            <person name="Berger A."/>
            <person name="Dooley C.M."/>
            <person name="Ersan-Urun Z."/>
            <person name="Eser C."/>
            <person name="Geiger H."/>
            <person name="Geisler M."/>
            <person name="Karotki L."/>
            <person name="Kirn A."/>
            <person name="Konantz J."/>
            <person name="Konantz M."/>
            <person name="Oberlander M."/>
            <person name="Rudolph-Geiger S."/>
            <person name="Teucke M."/>
            <person name="Lanz C."/>
            <person name="Raddatz G."/>
            <person name="Osoegawa K."/>
            <person name="Zhu B."/>
            <person name="Rapp A."/>
            <person name="Widaa S."/>
            <person name="Langford C."/>
            <person name="Yang F."/>
            <person name="Schuster S.C."/>
            <person name="Carter N.P."/>
            <person name="Harrow J."/>
            <person name="Ning Z."/>
            <person name="Herrero J."/>
            <person name="Searle S.M."/>
            <person name="Enright A."/>
            <person name="Geisler R."/>
            <person name="Plasterk R.H."/>
            <person name="Lee C."/>
            <person name="Westerfield M."/>
            <person name="de Jong P.J."/>
            <person name="Zon L.I."/>
            <person name="Postlethwait J.H."/>
            <person name="Nusslein-Volhard C."/>
            <person name="Hubbard T.J."/>
            <person name="Roest Crollius H."/>
            <person name="Rogers J."/>
            <person name="Stemple D.L."/>
        </authorList>
    </citation>
    <scope>NUCLEOTIDE SEQUENCE [LARGE SCALE GENOMIC DNA]</scope>
    <source>
        <strain>Tuebingen</strain>
    </source>
</reference>
<reference key="2">
    <citation type="submission" date="2005-05" db="EMBL/GenBank/DDBJ databases">
        <authorList>
            <consortium name="NIH - Zebrafish Gene Collection (ZGC) project"/>
        </authorList>
    </citation>
    <scope>NUCLEOTIDE SEQUENCE [LARGE SCALE MRNA] (ISOFORM 2)</scope>
    <source>
        <tissue>Brain</tissue>
    </source>
</reference>